<keyword id="KW-0010">Activator</keyword>
<keyword id="KW-0963">Cytoplasm</keyword>
<keyword id="KW-0238">DNA-binding</keyword>
<keyword id="KW-0597">Phosphoprotein</keyword>
<keyword id="KW-1185">Reference proteome</keyword>
<keyword id="KW-0804">Transcription</keyword>
<keyword id="KW-0805">Transcription regulation</keyword>
<keyword id="KW-0902">Two-component regulatory system</keyword>
<protein>
    <recommendedName>
        <fullName>Transcriptional regulatory protein ResD</fullName>
    </recommendedName>
</protein>
<reference key="1">
    <citation type="journal article" date="1993" name="Mol. Microbiol.">
        <title>The organization of the Bacillus subtilis 168 chromosome region between the spoVA and serA genetic loci, based on sequence data.</title>
        <authorList>
            <person name="Sorokin A.V."/>
            <person name="Zumstein E."/>
            <person name="Azevedo V."/>
            <person name="Ehrlich S.D."/>
            <person name="Serror P."/>
        </authorList>
    </citation>
    <scope>NUCLEOTIDE SEQUENCE [GENOMIC DNA]</scope>
    <source>
        <strain>168 / Marburg / ATCC 6051 / DSM 10 / JCM 1465 / NBRC 13719 / NCIMB 3610 / NRRL NRS-744 / VKM B-501</strain>
    </source>
</reference>
<reference key="2">
    <citation type="journal article" date="1997" name="Nature">
        <title>The complete genome sequence of the Gram-positive bacterium Bacillus subtilis.</title>
        <authorList>
            <person name="Kunst F."/>
            <person name="Ogasawara N."/>
            <person name="Moszer I."/>
            <person name="Albertini A.M."/>
            <person name="Alloni G."/>
            <person name="Azevedo V."/>
            <person name="Bertero M.G."/>
            <person name="Bessieres P."/>
            <person name="Bolotin A."/>
            <person name="Borchert S."/>
            <person name="Borriss R."/>
            <person name="Boursier L."/>
            <person name="Brans A."/>
            <person name="Braun M."/>
            <person name="Brignell S.C."/>
            <person name="Bron S."/>
            <person name="Brouillet S."/>
            <person name="Bruschi C.V."/>
            <person name="Caldwell B."/>
            <person name="Capuano V."/>
            <person name="Carter N.M."/>
            <person name="Choi S.-K."/>
            <person name="Codani J.-J."/>
            <person name="Connerton I.F."/>
            <person name="Cummings N.J."/>
            <person name="Daniel R.A."/>
            <person name="Denizot F."/>
            <person name="Devine K.M."/>
            <person name="Duesterhoeft A."/>
            <person name="Ehrlich S.D."/>
            <person name="Emmerson P.T."/>
            <person name="Entian K.-D."/>
            <person name="Errington J."/>
            <person name="Fabret C."/>
            <person name="Ferrari E."/>
            <person name="Foulger D."/>
            <person name="Fritz C."/>
            <person name="Fujita M."/>
            <person name="Fujita Y."/>
            <person name="Fuma S."/>
            <person name="Galizzi A."/>
            <person name="Galleron N."/>
            <person name="Ghim S.-Y."/>
            <person name="Glaser P."/>
            <person name="Goffeau A."/>
            <person name="Golightly E.J."/>
            <person name="Grandi G."/>
            <person name="Guiseppi G."/>
            <person name="Guy B.J."/>
            <person name="Haga K."/>
            <person name="Haiech J."/>
            <person name="Harwood C.R."/>
            <person name="Henaut A."/>
            <person name="Hilbert H."/>
            <person name="Holsappel S."/>
            <person name="Hosono S."/>
            <person name="Hullo M.-F."/>
            <person name="Itaya M."/>
            <person name="Jones L.-M."/>
            <person name="Joris B."/>
            <person name="Karamata D."/>
            <person name="Kasahara Y."/>
            <person name="Klaerr-Blanchard M."/>
            <person name="Klein C."/>
            <person name="Kobayashi Y."/>
            <person name="Koetter P."/>
            <person name="Koningstein G."/>
            <person name="Krogh S."/>
            <person name="Kumano M."/>
            <person name="Kurita K."/>
            <person name="Lapidus A."/>
            <person name="Lardinois S."/>
            <person name="Lauber J."/>
            <person name="Lazarevic V."/>
            <person name="Lee S.-M."/>
            <person name="Levine A."/>
            <person name="Liu H."/>
            <person name="Masuda S."/>
            <person name="Mauel C."/>
            <person name="Medigue C."/>
            <person name="Medina N."/>
            <person name="Mellado R.P."/>
            <person name="Mizuno M."/>
            <person name="Moestl D."/>
            <person name="Nakai S."/>
            <person name="Noback M."/>
            <person name="Noone D."/>
            <person name="O'Reilly M."/>
            <person name="Ogawa K."/>
            <person name="Ogiwara A."/>
            <person name="Oudega B."/>
            <person name="Park S.-H."/>
            <person name="Parro V."/>
            <person name="Pohl T.M."/>
            <person name="Portetelle D."/>
            <person name="Porwollik S."/>
            <person name="Prescott A.M."/>
            <person name="Presecan E."/>
            <person name="Pujic P."/>
            <person name="Purnelle B."/>
            <person name="Rapoport G."/>
            <person name="Rey M."/>
            <person name="Reynolds S."/>
            <person name="Rieger M."/>
            <person name="Rivolta C."/>
            <person name="Rocha E."/>
            <person name="Roche B."/>
            <person name="Rose M."/>
            <person name="Sadaie Y."/>
            <person name="Sato T."/>
            <person name="Scanlan E."/>
            <person name="Schleich S."/>
            <person name="Schroeter R."/>
            <person name="Scoffone F."/>
            <person name="Sekiguchi J."/>
            <person name="Sekowska A."/>
            <person name="Seror S.J."/>
            <person name="Serror P."/>
            <person name="Shin B.-S."/>
            <person name="Soldo B."/>
            <person name="Sorokin A."/>
            <person name="Tacconi E."/>
            <person name="Takagi T."/>
            <person name="Takahashi H."/>
            <person name="Takemaru K."/>
            <person name="Takeuchi M."/>
            <person name="Tamakoshi A."/>
            <person name="Tanaka T."/>
            <person name="Terpstra P."/>
            <person name="Tognoni A."/>
            <person name="Tosato V."/>
            <person name="Uchiyama S."/>
            <person name="Vandenbol M."/>
            <person name="Vannier F."/>
            <person name="Vassarotti A."/>
            <person name="Viari A."/>
            <person name="Wambutt R."/>
            <person name="Wedler E."/>
            <person name="Wedler H."/>
            <person name="Weitzenegger T."/>
            <person name="Winters P."/>
            <person name="Wipat A."/>
            <person name="Yamamoto H."/>
            <person name="Yamane K."/>
            <person name="Yasumoto K."/>
            <person name="Yata K."/>
            <person name="Yoshida K."/>
            <person name="Yoshikawa H.-F."/>
            <person name="Zumstein E."/>
            <person name="Yoshikawa H."/>
            <person name="Danchin A."/>
        </authorList>
    </citation>
    <scope>NUCLEOTIDE SEQUENCE [LARGE SCALE GENOMIC DNA]</scope>
    <source>
        <strain>168</strain>
    </source>
</reference>
<reference key="3">
    <citation type="journal article" date="2009" name="Microbiology">
        <title>From a consortium sequence to a unified sequence: the Bacillus subtilis 168 reference genome a decade later.</title>
        <authorList>
            <person name="Barbe V."/>
            <person name="Cruveiller S."/>
            <person name="Kunst F."/>
            <person name="Lenoble P."/>
            <person name="Meurice G."/>
            <person name="Sekowska A."/>
            <person name="Vallenet D."/>
            <person name="Wang T."/>
            <person name="Moszer I."/>
            <person name="Medigue C."/>
            <person name="Danchin A."/>
        </authorList>
    </citation>
    <scope>SEQUENCE REVISION TO 167</scope>
</reference>
<reference key="4">
    <citation type="journal article" date="1996" name="J. Bacteriol.">
        <title>Regulators of aerobic and anaerobic respiration in Bacillus subtilis.</title>
        <authorList>
            <person name="Sun G."/>
            <person name="Sharkova E."/>
            <person name="Chesnut R."/>
            <person name="Birkey S."/>
            <person name="Duggan M.F."/>
            <person name="Sorokin A.V."/>
            <person name="Pujic P."/>
            <person name="Ehrlich S.D."/>
            <person name="Hulett F.M."/>
        </authorList>
    </citation>
    <scope>FUNCTION</scope>
</reference>
<reference key="5">
    <citation type="journal article" date="1996" name="J. Bacteriol.">
        <title>Two-component regulatory proteins ResD-ResE are required for transcriptional activation of fnr upon oxygen limitation in Bacillus subtilis.</title>
        <authorList>
            <person name="Nakano M.N."/>
            <person name="Zuber P."/>
            <person name="Glaser P."/>
            <person name="Danchin A."/>
            <person name="Hulett F.M."/>
        </authorList>
    </citation>
    <scope>FUNCTION</scope>
</reference>
<reference key="6">
    <citation type="journal article" date="2011" name="Proteomics">
        <title>The dynamic protein partnership of RNA polymerase in Bacillus subtilis.</title>
        <authorList>
            <person name="Delumeau O."/>
            <person name="Lecointe F."/>
            <person name="Muntel J."/>
            <person name="Guillot A."/>
            <person name="Guedon E."/>
            <person name="Monnet V."/>
            <person name="Hecker M."/>
            <person name="Becher D."/>
            <person name="Polard P."/>
            <person name="Noirot P."/>
        </authorList>
    </citation>
    <scope>SUBUNIT</scope>
    <source>
        <strain>168</strain>
    </source>
</reference>
<organism>
    <name type="scientific">Bacillus subtilis (strain 168)</name>
    <dbReference type="NCBI Taxonomy" id="224308"/>
    <lineage>
        <taxon>Bacteria</taxon>
        <taxon>Bacillati</taxon>
        <taxon>Bacillota</taxon>
        <taxon>Bacilli</taxon>
        <taxon>Bacillales</taxon>
        <taxon>Bacillaceae</taxon>
        <taxon>Bacillus</taxon>
    </lineage>
</organism>
<comment type="function">
    <text evidence="4 5">Member of the two-component regulatory system ResD/ResE. Required for the expression of resA, ctaA, qcrABC and fnr; activation role in global regulation of aerobic and anaerobic respiration.</text>
</comment>
<comment type="subunit">
    <text evidence="3">Interacts with the RNA polymerase core.</text>
</comment>
<comment type="subcellular location">
    <subcellularLocation>
        <location evidence="6">Cytoplasm</location>
    </subcellularLocation>
</comment>
<comment type="PTM">
    <text evidence="6">Phosphorylated by ResE.</text>
</comment>
<accession>P35163</accession>
<proteinExistence type="evidence at protein level"/>
<feature type="chain" id="PRO_0000081296" description="Transcriptional regulatory protein ResD">
    <location>
        <begin position="1"/>
        <end position="240"/>
    </location>
</feature>
<feature type="domain" description="Response regulatory" evidence="1">
    <location>
        <begin position="8"/>
        <end position="121"/>
    </location>
</feature>
<feature type="DNA-binding region" description="OmpR/PhoB-type" evidence="2">
    <location>
        <begin position="137"/>
        <end position="237"/>
    </location>
</feature>
<feature type="modified residue" description="4-aspartylphosphate" evidence="1">
    <location>
        <position position="57"/>
    </location>
</feature>
<feature type="sequence conflict" description="In Ref. 1; AAA67497." evidence="6" ref="1">
    <original>E</original>
    <variation>V</variation>
    <location>
        <position position="167"/>
    </location>
</feature>
<name>RESD_BACSU</name>
<sequence>MDQTNETKILVVDDEARIRRLLRMYLERENYAIDEAENGDEAIAKGLEANYDLILLDLMMPGTDGIEVCRQIREKKATPIIMLTAKGEEANRVQGFEAGTDDYIVKPFSPREVVLRVKALLRRASQTSYFNANTPTKNVLVFSHLSIDHDAHRVTADGTEVSLTPKEYELLYFLAKTPDKVYDREKLLKEVWQYEFFGDLRTVDTHVKRLREKLNKVSPEAAKKIVTVWGVGYKFEVGAE</sequence>
<gene>
    <name type="primary">resD</name>
    <name type="synonym">ypxD</name>
    <name type="ordered locus">BSU23120</name>
</gene>
<dbReference type="EMBL" id="L09228">
    <property type="protein sequence ID" value="AAA67497.1"/>
    <property type="molecule type" value="Genomic_DNA"/>
</dbReference>
<dbReference type="EMBL" id="AL009126">
    <property type="protein sequence ID" value="CAB14244.2"/>
    <property type="molecule type" value="Genomic_DNA"/>
</dbReference>
<dbReference type="PIR" id="G69691">
    <property type="entry name" value="G69691"/>
</dbReference>
<dbReference type="RefSeq" id="NP_390193.2">
    <property type="nucleotide sequence ID" value="NC_000964.3"/>
</dbReference>
<dbReference type="RefSeq" id="WP_003246107.1">
    <property type="nucleotide sequence ID" value="NZ_OZ025638.1"/>
</dbReference>
<dbReference type="SMR" id="P35163"/>
<dbReference type="FunCoup" id="P35163">
    <property type="interactions" value="210"/>
</dbReference>
<dbReference type="STRING" id="224308.BSU23120"/>
<dbReference type="jPOST" id="P35163"/>
<dbReference type="PaxDb" id="224308-BSU23120"/>
<dbReference type="EnsemblBacteria" id="CAB14244">
    <property type="protein sequence ID" value="CAB14244"/>
    <property type="gene ID" value="BSU_23120"/>
</dbReference>
<dbReference type="GeneID" id="938960"/>
<dbReference type="KEGG" id="bsu:BSU23120"/>
<dbReference type="PATRIC" id="fig|224308.179.peg.2519"/>
<dbReference type="eggNOG" id="COG0745">
    <property type="taxonomic scope" value="Bacteria"/>
</dbReference>
<dbReference type="InParanoid" id="P35163"/>
<dbReference type="OrthoDB" id="9790442at2"/>
<dbReference type="PhylomeDB" id="P35163"/>
<dbReference type="BioCyc" id="BSUB:BSU23120-MONOMER"/>
<dbReference type="Proteomes" id="UP000001570">
    <property type="component" value="Chromosome"/>
</dbReference>
<dbReference type="GO" id="GO:0005829">
    <property type="term" value="C:cytosol"/>
    <property type="evidence" value="ECO:0000318"/>
    <property type="project" value="GO_Central"/>
</dbReference>
<dbReference type="GO" id="GO:0032993">
    <property type="term" value="C:protein-DNA complex"/>
    <property type="evidence" value="ECO:0000318"/>
    <property type="project" value="GO_Central"/>
</dbReference>
<dbReference type="GO" id="GO:0000156">
    <property type="term" value="F:phosphorelay response regulator activity"/>
    <property type="evidence" value="ECO:0000318"/>
    <property type="project" value="GO_Central"/>
</dbReference>
<dbReference type="GO" id="GO:0000976">
    <property type="term" value="F:transcription cis-regulatory region binding"/>
    <property type="evidence" value="ECO:0000318"/>
    <property type="project" value="GO_Central"/>
</dbReference>
<dbReference type="GO" id="GO:0006355">
    <property type="term" value="P:regulation of DNA-templated transcription"/>
    <property type="evidence" value="ECO:0000318"/>
    <property type="project" value="GO_Central"/>
</dbReference>
<dbReference type="CDD" id="cd17574">
    <property type="entry name" value="REC_OmpR"/>
    <property type="match status" value="1"/>
</dbReference>
<dbReference type="CDD" id="cd00383">
    <property type="entry name" value="trans_reg_C"/>
    <property type="match status" value="1"/>
</dbReference>
<dbReference type="FunFam" id="3.40.50.2300:FF:000001">
    <property type="entry name" value="DNA-binding response regulator PhoB"/>
    <property type="match status" value="1"/>
</dbReference>
<dbReference type="FunFam" id="1.10.10.10:FF:000018">
    <property type="entry name" value="DNA-binding response regulator ResD"/>
    <property type="match status" value="1"/>
</dbReference>
<dbReference type="Gene3D" id="3.40.50.2300">
    <property type="match status" value="1"/>
</dbReference>
<dbReference type="Gene3D" id="6.10.250.690">
    <property type="match status" value="1"/>
</dbReference>
<dbReference type="Gene3D" id="1.10.10.10">
    <property type="entry name" value="Winged helix-like DNA-binding domain superfamily/Winged helix DNA-binding domain"/>
    <property type="match status" value="1"/>
</dbReference>
<dbReference type="InterPro" id="IPR011006">
    <property type="entry name" value="CheY-like_superfamily"/>
</dbReference>
<dbReference type="InterPro" id="IPR001867">
    <property type="entry name" value="OmpR/PhoB-type_DNA-bd"/>
</dbReference>
<dbReference type="InterPro" id="IPR001789">
    <property type="entry name" value="Sig_transdc_resp-reg_receiver"/>
</dbReference>
<dbReference type="InterPro" id="IPR039420">
    <property type="entry name" value="WalR-like"/>
</dbReference>
<dbReference type="InterPro" id="IPR036388">
    <property type="entry name" value="WH-like_DNA-bd_sf"/>
</dbReference>
<dbReference type="PANTHER" id="PTHR48111">
    <property type="entry name" value="REGULATOR OF RPOS"/>
    <property type="match status" value="1"/>
</dbReference>
<dbReference type="PANTHER" id="PTHR48111:SF44">
    <property type="entry name" value="TRANSCRIPTIONAL REGULATORY PROTEIN RESD"/>
    <property type="match status" value="1"/>
</dbReference>
<dbReference type="Pfam" id="PF00072">
    <property type="entry name" value="Response_reg"/>
    <property type="match status" value="1"/>
</dbReference>
<dbReference type="Pfam" id="PF00486">
    <property type="entry name" value="Trans_reg_C"/>
    <property type="match status" value="1"/>
</dbReference>
<dbReference type="SMART" id="SM00448">
    <property type="entry name" value="REC"/>
    <property type="match status" value="1"/>
</dbReference>
<dbReference type="SMART" id="SM00862">
    <property type="entry name" value="Trans_reg_C"/>
    <property type="match status" value="1"/>
</dbReference>
<dbReference type="SUPFAM" id="SSF52172">
    <property type="entry name" value="CheY-like"/>
    <property type="match status" value="1"/>
</dbReference>
<dbReference type="PROSITE" id="PS51755">
    <property type="entry name" value="OMPR_PHOB"/>
    <property type="match status" value="1"/>
</dbReference>
<dbReference type="PROSITE" id="PS50110">
    <property type="entry name" value="RESPONSE_REGULATORY"/>
    <property type="match status" value="1"/>
</dbReference>
<evidence type="ECO:0000255" key="1">
    <source>
        <dbReference type="PROSITE-ProRule" id="PRU00169"/>
    </source>
</evidence>
<evidence type="ECO:0000255" key="2">
    <source>
        <dbReference type="PROSITE-ProRule" id="PRU01091"/>
    </source>
</evidence>
<evidence type="ECO:0000269" key="3">
    <source>
    </source>
</evidence>
<evidence type="ECO:0000269" key="4">
    <source>
    </source>
</evidence>
<evidence type="ECO:0000269" key="5">
    <source>
    </source>
</evidence>
<evidence type="ECO:0000305" key="6"/>